<name>YQGF_PSEAB</name>
<keyword id="KW-0963">Cytoplasm</keyword>
<keyword id="KW-0378">Hydrolase</keyword>
<keyword id="KW-0540">Nuclease</keyword>
<keyword id="KW-0690">Ribosome biogenesis</keyword>
<dbReference type="EC" id="3.1.-.-" evidence="1"/>
<dbReference type="EMBL" id="CP000438">
    <property type="protein sequence ID" value="ABJ15371.1"/>
    <property type="molecule type" value="Genomic_DNA"/>
</dbReference>
<dbReference type="SMR" id="Q02U08"/>
<dbReference type="KEGG" id="pau:PA14_05280"/>
<dbReference type="PseudoCAP" id="PA14_05280"/>
<dbReference type="HOGENOM" id="CLU_098240_3_0_6"/>
<dbReference type="BioCyc" id="PAER208963:G1G74-439-MONOMER"/>
<dbReference type="Proteomes" id="UP000000653">
    <property type="component" value="Chromosome"/>
</dbReference>
<dbReference type="GO" id="GO:0005829">
    <property type="term" value="C:cytosol"/>
    <property type="evidence" value="ECO:0007669"/>
    <property type="project" value="TreeGrafter"/>
</dbReference>
<dbReference type="GO" id="GO:0004518">
    <property type="term" value="F:nuclease activity"/>
    <property type="evidence" value="ECO:0007669"/>
    <property type="project" value="UniProtKB-KW"/>
</dbReference>
<dbReference type="GO" id="GO:0000967">
    <property type="term" value="P:rRNA 5'-end processing"/>
    <property type="evidence" value="ECO:0007669"/>
    <property type="project" value="UniProtKB-UniRule"/>
</dbReference>
<dbReference type="CDD" id="cd16964">
    <property type="entry name" value="YqgF"/>
    <property type="match status" value="1"/>
</dbReference>
<dbReference type="FunFam" id="3.30.420.140:FF:000002">
    <property type="entry name" value="Putative pre-16S rRNA nuclease"/>
    <property type="match status" value="1"/>
</dbReference>
<dbReference type="Gene3D" id="3.30.420.140">
    <property type="entry name" value="YqgF/RNase H-like domain"/>
    <property type="match status" value="1"/>
</dbReference>
<dbReference type="HAMAP" id="MF_00651">
    <property type="entry name" value="Nuclease_YqgF"/>
    <property type="match status" value="1"/>
</dbReference>
<dbReference type="InterPro" id="IPR012337">
    <property type="entry name" value="RNaseH-like_sf"/>
</dbReference>
<dbReference type="InterPro" id="IPR005227">
    <property type="entry name" value="YqgF"/>
</dbReference>
<dbReference type="InterPro" id="IPR006641">
    <property type="entry name" value="YqgF/RNaseH-like_dom"/>
</dbReference>
<dbReference type="InterPro" id="IPR037027">
    <property type="entry name" value="YqgF/RNaseH-like_dom_sf"/>
</dbReference>
<dbReference type="NCBIfam" id="TIGR00250">
    <property type="entry name" value="RNAse_H_YqgF"/>
    <property type="match status" value="1"/>
</dbReference>
<dbReference type="PANTHER" id="PTHR33317">
    <property type="entry name" value="POLYNUCLEOTIDYL TRANSFERASE, RIBONUCLEASE H-LIKE SUPERFAMILY PROTEIN"/>
    <property type="match status" value="1"/>
</dbReference>
<dbReference type="PANTHER" id="PTHR33317:SF4">
    <property type="entry name" value="POLYNUCLEOTIDYL TRANSFERASE, RIBONUCLEASE H-LIKE SUPERFAMILY PROTEIN"/>
    <property type="match status" value="1"/>
</dbReference>
<dbReference type="Pfam" id="PF03652">
    <property type="entry name" value="RuvX"/>
    <property type="match status" value="1"/>
</dbReference>
<dbReference type="SMART" id="SM00732">
    <property type="entry name" value="YqgFc"/>
    <property type="match status" value="1"/>
</dbReference>
<dbReference type="SUPFAM" id="SSF53098">
    <property type="entry name" value="Ribonuclease H-like"/>
    <property type="match status" value="1"/>
</dbReference>
<sequence length="144" mass="15955">MASDKPLRLLLGFDYGTRQIGVAVGQAVTGQARELCVLKAQNGVPDWNRVEALIKEWQPDAIVVGLPLNMDGSPSEMSERAEKFGRRLNGRFNLPVFTHDERLTTYAAKGERLAQGQRDGYRERPVDALAAALLLEGWLAEHPD</sequence>
<accession>Q02U08</accession>
<gene>
    <name type="ordered locus">PA14_05280</name>
</gene>
<feature type="chain" id="PRO_1000061556" description="Putative pre-16S rRNA nuclease">
    <location>
        <begin position="1"/>
        <end position="144"/>
    </location>
</feature>
<evidence type="ECO:0000255" key="1">
    <source>
        <dbReference type="HAMAP-Rule" id="MF_00651"/>
    </source>
</evidence>
<organism>
    <name type="scientific">Pseudomonas aeruginosa (strain UCBPP-PA14)</name>
    <dbReference type="NCBI Taxonomy" id="208963"/>
    <lineage>
        <taxon>Bacteria</taxon>
        <taxon>Pseudomonadati</taxon>
        <taxon>Pseudomonadota</taxon>
        <taxon>Gammaproteobacteria</taxon>
        <taxon>Pseudomonadales</taxon>
        <taxon>Pseudomonadaceae</taxon>
        <taxon>Pseudomonas</taxon>
    </lineage>
</organism>
<comment type="function">
    <text evidence="1">Could be a nuclease involved in processing of the 5'-end of pre-16S rRNA.</text>
</comment>
<comment type="subcellular location">
    <subcellularLocation>
        <location evidence="1">Cytoplasm</location>
    </subcellularLocation>
</comment>
<comment type="similarity">
    <text evidence="1">Belongs to the YqgF nuclease family.</text>
</comment>
<proteinExistence type="inferred from homology"/>
<reference key="1">
    <citation type="journal article" date="2006" name="Genome Biol.">
        <title>Genomic analysis reveals that Pseudomonas aeruginosa virulence is combinatorial.</title>
        <authorList>
            <person name="Lee D.G."/>
            <person name="Urbach J.M."/>
            <person name="Wu G."/>
            <person name="Liberati N.T."/>
            <person name="Feinbaum R.L."/>
            <person name="Miyata S."/>
            <person name="Diggins L.T."/>
            <person name="He J."/>
            <person name="Saucier M."/>
            <person name="Deziel E."/>
            <person name="Friedman L."/>
            <person name="Li L."/>
            <person name="Grills G."/>
            <person name="Montgomery K."/>
            <person name="Kucherlapati R."/>
            <person name="Rahme L.G."/>
            <person name="Ausubel F.M."/>
        </authorList>
    </citation>
    <scope>NUCLEOTIDE SEQUENCE [LARGE SCALE GENOMIC DNA]</scope>
    <source>
        <strain>UCBPP-PA14</strain>
    </source>
</reference>
<protein>
    <recommendedName>
        <fullName evidence="1">Putative pre-16S rRNA nuclease</fullName>
        <ecNumber evidence="1">3.1.-.-</ecNumber>
    </recommendedName>
</protein>